<reference key="1">
    <citation type="submission" date="2007-08" db="EMBL/GenBank/DDBJ databases">
        <title>Complete sequence of Thermotoga lettingae TMO.</title>
        <authorList>
            <consortium name="US DOE Joint Genome Institute"/>
            <person name="Copeland A."/>
            <person name="Lucas S."/>
            <person name="Lapidus A."/>
            <person name="Barry K."/>
            <person name="Glavina del Rio T."/>
            <person name="Dalin E."/>
            <person name="Tice H."/>
            <person name="Pitluck S."/>
            <person name="Foster B."/>
            <person name="Bruce D."/>
            <person name="Schmutz J."/>
            <person name="Larimer F."/>
            <person name="Land M."/>
            <person name="Hauser L."/>
            <person name="Kyrpides N."/>
            <person name="Mikhailova N."/>
            <person name="Nelson K."/>
            <person name="Gogarten J.P."/>
            <person name="Noll K."/>
            <person name="Richardson P."/>
        </authorList>
    </citation>
    <scope>NUCLEOTIDE SEQUENCE [LARGE SCALE GENOMIC DNA]</scope>
    <source>
        <strain>ATCC BAA-301 / DSM 14385 / NBRC 107922 / TMO</strain>
    </source>
</reference>
<dbReference type="EC" id="6.3.4.4" evidence="1"/>
<dbReference type="EMBL" id="CP000812">
    <property type="protein sequence ID" value="ABV34285.1"/>
    <property type="molecule type" value="Genomic_DNA"/>
</dbReference>
<dbReference type="SMR" id="A8F801"/>
<dbReference type="STRING" id="416591.Tlet_1731"/>
<dbReference type="KEGG" id="tle:Tlet_1731"/>
<dbReference type="eggNOG" id="COG0104">
    <property type="taxonomic scope" value="Bacteria"/>
</dbReference>
<dbReference type="HOGENOM" id="CLU_029848_0_0_0"/>
<dbReference type="OrthoDB" id="9807553at2"/>
<dbReference type="UniPathway" id="UPA00075">
    <property type="reaction ID" value="UER00335"/>
</dbReference>
<dbReference type="Proteomes" id="UP000002016">
    <property type="component" value="Chromosome"/>
</dbReference>
<dbReference type="GO" id="GO:0005737">
    <property type="term" value="C:cytoplasm"/>
    <property type="evidence" value="ECO:0007669"/>
    <property type="project" value="UniProtKB-SubCell"/>
</dbReference>
<dbReference type="GO" id="GO:0004019">
    <property type="term" value="F:adenylosuccinate synthase activity"/>
    <property type="evidence" value="ECO:0007669"/>
    <property type="project" value="UniProtKB-UniRule"/>
</dbReference>
<dbReference type="GO" id="GO:0005525">
    <property type="term" value="F:GTP binding"/>
    <property type="evidence" value="ECO:0007669"/>
    <property type="project" value="UniProtKB-UniRule"/>
</dbReference>
<dbReference type="GO" id="GO:0000287">
    <property type="term" value="F:magnesium ion binding"/>
    <property type="evidence" value="ECO:0007669"/>
    <property type="project" value="UniProtKB-UniRule"/>
</dbReference>
<dbReference type="GO" id="GO:0044208">
    <property type="term" value="P:'de novo' AMP biosynthetic process"/>
    <property type="evidence" value="ECO:0007669"/>
    <property type="project" value="UniProtKB-UniRule"/>
</dbReference>
<dbReference type="GO" id="GO:0046040">
    <property type="term" value="P:IMP metabolic process"/>
    <property type="evidence" value="ECO:0007669"/>
    <property type="project" value="TreeGrafter"/>
</dbReference>
<dbReference type="CDD" id="cd03108">
    <property type="entry name" value="AdSS"/>
    <property type="match status" value="1"/>
</dbReference>
<dbReference type="FunFam" id="3.90.170.10:FF:000001">
    <property type="entry name" value="Adenylosuccinate synthetase"/>
    <property type="match status" value="1"/>
</dbReference>
<dbReference type="Gene3D" id="3.40.440.10">
    <property type="entry name" value="Adenylosuccinate Synthetase, subunit A, domain 1"/>
    <property type="match status" value="1"/>
</dbReference>
<dbReference type="Gene3D" id="1.10.300.10">
    <property type="entry name" value="Adenylosuccinate Synthetase, subunit A, domain 2"/>
    <property type="match status" value="1"/>
</dbReference>
<dbReference type="Gene3D" id="3.90.170.10">
    <property type="entry name" value="Adenylosuccinate Synthetase, subunit A, domain 3"/>
    <property type="match status" value="1"/>
</dbReference>
<dbReference type="HAMAP" id="MF_00011">
    <property type="entry name" value="Adenylosucc_synth"/>
    <property type="match status" value="1"/>
</dbReference>
<dbReference type="InterPro" id="IPR018220">
    <property type="entry name" value="Adenylosuccin_syn_GTP-bd"/>
</dbReference>
<dbReference type="InterPro" id="IPR042109">
    <property type="entry name" value="Adenylosuccinate_synth_dom1"/>
</dbReference>
<dbReference type="InterPro" id="IPR042110">
    <property type="entry name" value="Adenylosuccinate_synth_dom2"/>
</dbReference>
<dbReference type="InterPro" id="IPR042111">
    <property type="entry name" value="Adenylosuccinate_synth_dom3"/>
</dbReference>
<dbReference type="InterPro" id="IPR001114">
    <property type="entry name" value="Adenylosuccinate_synthetase"/>
</dbReference>
<dbReference type="InterPro" id="IPR027417">
    <property type="entry name" value="P-loop_NTPase"/>
</dbReference>
<dbReference type="NCBIfam" id="NF002223">
    <property type="entry name" value="PRK01117.1"/>
    <property type="match status" value="1"/>
</dbReference>
<dbReference type="NCBIfam" id="NF010355">
    <property type="entry name" value="PRK13783.1"/>
    <property type="match status" value="1"/>
</dbReference>
<dbReference type="PANTHER" id="PTHR11846">
    <property type="entry name" value="ADENYLOSUCCINATE SYNTHETASE"/>
    <property type="match status" value="1"/>
</dbReference>
<dbReference type="PANTHER" id="PTHR11846:SF0">
    <property type="entry name" value="ADENYLOSUCCINATE SYNTHETASE"/>
    <property type="match status" value="1"/>
</dbReference>
<dbReference type="Pfam" id="PF00709">
    <property type="entry name" value="Adenylsucc_synt"/>
    <property type="match status" value="1"/>
</dbReference>
<dbReference type="SMART" id="SM00788">
    <property type="entry name" value="Adenylsucc_synt"/>
    <property type="match status" value="1"/>
</dbReference>
<dbReference type="SUPFAM" id="SSF52540">
    <property type="entry name" value="P-loop containing nucleoside triphosphate hydrolases"/>
    <property type="match status" value="1"/>
</dbReference>
<dbReference type="PROSITE" id="PS01266">
    <property type="entry name" value="ADENYLOSUCCIN_SYN_1"/>
    <property type="match status" value="1"/>
</dbReference>
<accession>A8F801</accession>
<sequence>MLKAAVIGLQWGDEGKGKVVTYLSRRYDCVVRYSGGSNAGHTVDYGNFKMVHHLLPSADIKKQKMMYIGPGVVVDLDVLLEEIDQINNLIPESRSLLRISKQAHVVIPIYRDLDEKIDSSRANQIGTTRRGIGISYANRAMRCGLRLEDFETPARAESFLNEISRTWSIKFDVKMILDSLIEKYNKIRDLLIDSSEAVRVLKEKDLLFEGTQGVLLDVDMGTYPYVTSTNCSTTGIQPGFGYPVQVDKIFGVMKAYTTRVGEGPFPTELKDEVGENLRRLGSEYGATTRRPRRCGWLDLVLIKYAIETSACNALIMTKADILSGFEKIPICMGYKIGGKFYTQINNTAHLTEIEPVYEEIKGWKSLHSKEFDDFIYKIERELGLKFAYISTGPKIEEITEL</sequence>
<keyword id="KW-0963">Cytoplasm</keyword>
<keyword id="KW-0342">GTP-binding</keyword>
<keyword id="KW-0436">Ligase</keyword>
<keyword id="KW-0460">Magnesium</keyword>
<keyword id="KW-0479">Metal-binding</keyword>
<keyword id="KW-0547">Nucleotide-binding</keyword>
<keyword id="KW-0658">Purine biosynthesis</keyword>
<keyword id="KW-1185">Reference proteome</keyword>
<name>PURA_PSELT</name>
<protein>
    <recommendedName>
        <fullName evidence="1">Adenylosuccinate synthetase</fullName>
        <shortName evidence="1">AMPSase</shortName>
        <shortName evidence="1">AdSS</shortName>
        <ecNumber evidence="1">6.3.4.4</ecNumber>
    </recommendedName>
    <alternativeName>
        <fullName evidence="1">IMP--aspartate ligase</fullName>
    </alternativeName>
</protein>
<gene>
    <name evidence="1" type="primary">purA</name>
    <name type="ordered locus">Tlet_1731</name>
</gene>
<organism>
    <name type="scientific">Pseudothermotoga lettingae (strain ATCC BAA-301 / DSM 14385 / NBRC 107922 / TMO)</name>
    <name type="common">Thermotoga lettingae</name>
    <dbReference type="NCBI Taxonomy" id="416591"/>
    <lineage>
        <taxon>Bacteria</taxon>
        <taxon>Thermotogati</taxon>
        <taxon>Thermotogota</taxon>
        <taxon>Thermotogae</taxon>
        <taxon>Thermotogales</taxon>
        <taxon>Thermotogaceae</taxon>
        <taxon>Pseudothermotoga</taxon>
    </lineage>
</organism>
<evidence type="ECO:0000255" key="1">
    <source>
        <dbReference type="HAMAP-Rule" id="MF_00011"/>
    </source>
</evidence>
<proteinExistence type="inferred from homology"/>
<feature type="chain" id="PRO_1000070946" description="Adenylosuccinate synthetase">
    <location>
        <begin position="1"/>
        <end position="401"/>
    </location>
</feature>
<feature type="active site" description="Proton acceptor" evidence="1">
    <location>
        <position position="13"/>
    </location>
</feature>
<feature type="active site" description="Proton donor" evidence="1">
    <location>
        <position position="41"/>
    </location>
</feature>
<feature type="binding site" evidence="1">
    <location>
        <begin position="12"/>
        <end position="18"/>
    </location>
    <ligand>
        <name>GTP</name>
        <dbReference type="ChEBI" id="CHEBI:37565"/>
    </ligand>
</feature>
<feature type="binding site" description="in other chain" evidence="1">
    <location>
        <begin position="13"/>
        <end position="16"/>
    </location>
    <ligand>
        <name>IMP</name>
        <dbReference type="ChEBI" id="CHEBI:58053"/>
        <note>ligand shared between dimeric partners</note>
    </ligand>
</feature>
<feature type="binding site" evidence="1">
    <location>
        <position position="13"/>
    </location>
    <ligand>
        <name>Mg(2+)</name>
        <dbReference type="ChEBI" id="CHEBI:18420"/>
    </ligand>
</feature>
<feature type="binding site" description="in other chain" evidence="1">
    <location>
        <begin position="38"/>
        <end position="41"/>
    </location>
    <ligand>
        <name>IMP</name>
        <dbReference type="ChEBI" id="CHEBI:58053"/>
        <note>ligand shared between dimeric partners</note>
    </ligand>
</feature>
<feature type="binding site" evidence="1">
    <location>
        <begin position="40"/>
        <end position="42"/>
    </location>
    <ligand>
        <name>GTP</name>
        <dbReference type="ChEBI" id="CHEBI:37565"/>
    </ligand>
</feature>
<feature type="binding site" evidence="1">
    <location>
        <position position="40"/>
    </location>
    <ligand>
        <name>Mg(2+)</name>
        <dbReference type="ChEBI" id="CHEBI:18420"/>
    </ligand>
</feature>
<feature type="binding site" description="in other chain" evidence="1">
    <location>
        <position position="128"/>
    </location>
    <ligand>
        <name>IMP</name>
        <dbReference type="ChEBI" id="CHEBI:58053"/>
        <note>ligand shared between dimeric partners</note>
    </ligand>
</feature>
<feature type="binding site" evidence="1">
    <location>
        <position position="142"/>
    </location>
    <ligand>
        <name>IMP</name>
        <dbReference type="ChEBI" id="CHEBI:58053"/>
        <note>ligand shared between dimeric partners</note>
    </ligand>
</feature>
<feature type="binding site" description="in other chain" evidence="1">
    <location>
        <position position="212"/>
    </location>
    <ligand>
        <name>IMP</name>
        <dbReference type="ChEBI" id="CHEBI:58053"/>
        <note>ligand shared between dimeric partners</note>
    </ligand>
</feature>
<feature type="binding site" description="in other chain" evidence="1">
    <location>
        <position position="227"/>
    </location>
    <ligand>
        <name>IMP</name>
        <dbReference type="ChEBI" id="CHEBI:58053"/>
        <note>ligand shared between dimeric partners</note>
    </ligand>
</feature>
<feature type="binding site" evidence="1">
    <location>
        <begin position="286"/>
        <end position="292"/>
    </location>
    <ligand>
        <name>substrate</name>
    </ligand>
</feature>
<feature type="binding site" description="in other chain" evidence="1">
    <location>
        <position position="290"/>
    </location>
    <ligand>
        <name>IMP</name>
        <dbReference type="ChEBI" id="CHEBI:58053"/>
        <note>ligand shared between dimeric partners</note>
    </ligand>
</feature>
<feature type="binding site" evidence="1">
    <location>
        <position position="292"/>
    </location>
    <ligand>
        <name>GTP</name>
        <dbReference type="ChEBI" id="CHEBI:37565"/>
    </ligand>
</feature>
<feature type="binding site" evidence="1">
    <location>
        <begin position="318"/>
        <end position="320"/>
    </location>
    <ligand>
        <name>GTP</name>
        <dbReference type="ChEBI" id="CHEBI:37565"/>
    </ligand>
</feature>
<feature type="binding site" evidence="1">
    <location>
        <begin position="390"/>
        <end position="392"/>
    </location>
    <ligand>
        <name>GTP</name>
        <dbReference type="ChEBI" id="CHEBI:37565"/>
    </ligand>
</feature>
<comment type="function">
    <text evidence="1">Plays an important role in the de novo pathway of purine nucleotide biosynthesis. Catalyzes the first committed step in the biosynthesis of AMP from IMP.</text>
</comment>
<comment type="catalytic activity">
    <reaction evidence="1">
        <text>IMP + L-aspartate + GTP = N(6)-(1,2-dicarboxyethyl)-AMP + GDP + phosphate + 2 H(+)</text>
        <dbReference type="Rhea" id="RHEA:15753"/>
        <dbReference type="ChEBI" id="CHEBI:15378"/>
        <dbReference type="ChEBI" id="CHEBI:29991"/>
        <dbReference type="ChEBI" id="CHEBI:37565"/>
        <dbReference type="ChEBI" id="CHEBI:43474"/>
        <dbReference type="ChEBI" id="CHEBI:57567"/>
        <dbReference type="ChEBI" id="CHEBI:58053"/>
        <dbReference type="ChEBI" id="CHEBI:58189"/>
        <dbReference type="EC" id="6.3.4.4"/>
    </reaction>
</comment>
<comment type="cofactor">
    <cofactor evidence="1">
        <name>Mg(2+)</name>
        <dbReference type="ChEBI" id="CHEBI:18420"/>
    </cofactor>
    <text evidence="1">Binds 1 Mg(2+) ion per subunit.</text>
</comment>
<comment type="pathway">
    <text evidence="1">Purine metabolism; AMP biosynthesis via de novo pathway; AMP from IMP: step 1/2.</text>
</comment>
<comment type="subunit">
    <text evidence="1">Homodimer.</text>
</comment>
<comment type="subcellular location">
    <subcellularLocation>
        <location evidence="1">Cytoplasm</location>
    </subcellularLocation>
</comment>
<comment type="similarity">
    <text evidence="1">Belongs to the adenylosuccinate synthetase family.</text>
</comment>